<feature type="chain" id="PRO_0000390083" description="NADH-quinone oxidoreductase subunit K 2">
    <location>
        <begin position="1"/>
        <end position="102"/>
    </location>
</feature>
<feature type="transmembrane region" description="Helical" evidence="1">
    <location>
        <begin position="5"/>
        <end position="25"/>
    </location>
</feature>
<feature type="transmembrane region" description="Helical" evidence="1">
    <location>
        <begin position="30"/>
        <end position="50"/>
    </location>
</feature>
<feature type="transmembrane region" description="Helical" evidence="1">
    <location>
        <begin position="65"/>
        <end position="85"/>
    </location>
</feature>
<dbReference type="EC" id="7.1.1.-" evidence="1"/>
<dbReference type="EMBL" id="AE017180">
    <property type="protein sequence ID" value="AAR36822.1"/>
    <property type="molecule type" value="Genomic_DNA"/>
</dbReference>
<dbReference type="RefSeq" id="NP_954472.1">
    <property type="nucleotide sequence ID" value="NC_002939.5"/>
</dbReference>
<dbReference type="SMR" id="Q746T6"/>
<dbReference type="FunCoup" id="Q746T6">
    <property type="interactions" value="270"/>
</dbReference>
<dbReference type="STRING" id="243231.GSU3432"/>
<dbReference type="TCDB" id="3.D.1.5.1">
    <property type="family name" value="the h+ or na+-translocating nadh dehydrogenase (ndh) family"/>
</dbReference>
<dbReference type="EnsemblBacteria" id="AAR36822">
    <property type="protein sequence ID" value="AAR36822"/>
    <property type="gene ID" value="GSU3432"/>
</dbReference>
<dbReference type="KEGG" id="gsu:GSU3432"/>
<dbReference type="PATRIC" id="fig|243231.5.peg.3454"/>
<dbReference type="eggNOG" id="COG0713">
    <property type="taxonomic scope" value="Bacteria"/>
</dbReference>
<dbReference type="HOGENOM" id="CLU_144724_0_1_7"/>
<dbReference type="InParanoid" id="Q746T6"/>
<dbReference type="OrthoDB" id="9810120at2"/>
<dbReference type="Proteomes" id="UP000000577">
    <property type="component" value="Chromosome"/>
</dbReference>
<dbReference type="GO" id="GO:0030964">
    <property type="term" value="C:NADH dehydrogenase complex"/>
    <property type="evidence" value="ECO:0000318"/>
    <property type="project" value="GO_Central"/>
</dbReference>
<dbReference type="GO" id="GO:0005886">
    <property type="term" value="C:plasma membrane"/>
    <property type="evidence" value="ECO:0007669"/>
    <property type="project" value="UniProtKB-SubCell"/>
</dbReference>
<dbReference type="GO" id="GO:0050136">
    <property type="term" value="F:NADH:ubiquinone reductase (non-electrogenic) activity"/>
    <property type="evidence" value="ECO:0007669"/>
    <property type="project" value="UniProtKB-UniRule"/>
</dbReference>
<dbReference type="GO" id="GO:0048038">
    <property type="term" value="F:quinone binding"/>
    <property type="evidence" value="ECO:0007669"/>
    <property type="project" value="UniProtKB-KW"/>
</dbReference>
<dbReference type="GO" id="GO:0042773">
    <property type="term" value="P:ATP synthesis coupled electron transport"/>
    <property type="evidence" value="ECO:0007669"/>
    <property type="project" value="InterPro"/>
</dbReference>
<dbReference type="FunFam" id="1.10.287.3510:FF:000001">
    <property type="entry name" value="NADH-quinone oxidoreductase subunit K"/>
    <property type="match status" value="1"/>
</dbReference>
<dbReference type="Gene3D" id="1.10.287.3510">
    <property type="match status" value="1"/>
</dbReference>
<dbReference type="HAMAP" id="MF_01456">
    <property type="entry name" value="NDH1_NuoK"/>
    <property type="match status" value="1"/>
</dbReference>
<dbReference type="InterPro" id="IPR001133">
    <property type="entry name" value="NADH_UbQ_OxRdtase_chain4L/K"/>
</dbReference>
<dbReference type="InterPro" id="IPR039428">
    <property type="entry name" value="NUOK/Mnh_C1-like"/>
</dbReference>
<dbReference type="NCBIfam" id="NF004320">
    <property type="entry name" value="PRK05715.1-2"/>
    <property type="match status" value="1"/>
</dbReference>
<dbReference type="PANTHER" id="PTHR11434:SF16">
    <property type="entry name" value="NADH-UBIQUINONE OXIDOREDUCTASE CHAIN 4L"/>
    <property type="match status" value="1"/>
</dbReference>
<dbReference type="PANTHER" id="PTHR11434">
    <property type="entry name" value="NADH-UBIQUINONE OXIDOREDUCTASE SUBUNIT ND4L"/>
    <property type="match status" value="1"/>
</dbReference>
<dbReference type="Pfam" id="PF00420">
    <property type="entry name" value="Oxidored_q2"/>
    <property type="match status" value="1"/>
</dbReference>
<organism>
    <name type="scientific">Geobacter sulfurreducens (strain ATCC 51573 / DSM 12127 / PCA)</name>
    <dbReference type="NCBI Taxonomy" id="243231"/>
    <lineage>
        <taxon>Bacteria</taxon>
        <taxon>Pseudomonadati</taxon>
        <taxon>Thermodesulfobacteriota</taxon>
        <taxon>Desulfuromonadia</taxon>
        <taxon>Geobacterales</taxon>
        <taxon>Geobacteraceae</taxon>
        <taxon>Geobacter</taxon>
    </lineage>
</organism>
<evidence type="ECO:0000255" key="1">
    <source>
        <dbReference type="HAMAP-Rule" id="MF_01456"/>
    </source>
</evidence>
<reference key="1">
    <citation type="journal article" date="2003" name="Science">
        <title>Genome of Geobacter sulfurreducens: metal reduction in subsurface environments.</title>
        <authorList>
            <person name="Methe B.A."/>
            <person name="Nelson K.E."/>
            <person name="Eisen J.A."/>
            <person name="Paulsen I.T."/>
            <person name="Nelson W.C."/>
            <person name="Heidelberg J.F."/>
            <person name="Wu D."/>
            <person name="Wu M."/>
            <person name="Ward N.L."/>
            <person name="Beanan M.J."/>
            <person name="Dodson R.J."/>
            <person name="Madupu R."/>
            <person name="Brinkac L.M."/>
            <person name="Daugherty S.C."/>
            <person name="DeBoy R.T."/>
            <person name="Durkin A.S."/>
            <person name="Gwinn M.L."/>
            <person name="Kolonay J.F."/>
            <person name="Sullivan S.A."/>
            <person name="Haft D.H."/>
            <person name="Selengut J."/>
            <person name="Davidsen T.M."/>
            <person name="Zafar N."/>
            <person name="White O."/>
            <person name="Tran B."/>
            <person name="Romero C."/>
            <person name="Forberger H.A."/>
            <person name="Weidman J.F."/>
            <person name="Khouri H.M."/>
            <person name="Feldblyum T.V."/>
            <person name="Utterback T.R."/>
            <person name="Van Aken S.E."/>
            <person name="Lovley D.R."/>
            <person name="Fraser C.M."/>
        </authorList>
    </citation>
    <scope>NUCLEOTIDE SEQUENCE [LARGE SCALE GENOMIC DNA]</scope>
    <source>
        <strain>ATCC 51573 / DSM 12127 / PCA</strain>
    </source>
</reference>
<sequence length="102" mass="11189">MIVPFEHVLILAGLLFALGLVCVLVWRMNLIMLLIGIEVMLNAAMLAFVGGAARWGMADGQVFSLIIMALTSAEVSLALAMVVYLHRRKKTVDADEFRELQG</sequence>
<accession>Q746T6</accession>
<keyword id="KW-0997">Cell inner membrane</keyword>
<keyword id="KW-1003">Cell membrane</keyword>
<keyword id="KW-0472">Membrane</keyword>
<keyword id="KW-0520">NAD</keyword>
<keyword id="KW-0874">Quinone</keyword>
<keyword id="KW-1185">Reference proteome</keyword>
<keyword id="KW-1278">Translocase</keyword>
<keyword id="KW-0812">Transmembrane</keyword>
<keyword id="KW-1133">Transmembrane helix</keyword>
<keyword id="KW-0813">Transport</keyword>
<keyword id="KW-0830">Ubiquinone</keyword>
<protein>
    <recommendedName>
        <fullName evidence="1">NADH-quinone oxidoreductase subunit K 2</fullName>
        <ecNumber evidence="1">7.1.1.-</ecNumber>
    </recommendedName>
    <alternativeName>
        <fullName evidence="1">NADH dehydrogenase I subunit K 2</fullName>
    </alternativeName>
    <alternativeName>
        <fullName evidence="1">NDH-1 subunit K 2</fullName>
    </alternativeName>
</protein>
<comment type="function">
    <text evidence="1">NDH-1 shuttles electrons from NADH, via FMN and iron-sulfur (Fe-S) centers, to quinones in the respiratory chain. The immediate electron acceptor for the enzyme in this species is believed to be ubiquinone. Couples the redox reaction to proton translocation (for every two electrons transferred, four hydrogen ions are translocated across the cytoplasmic membrane), and thus conserves the redox energy in a proton gradient.</text>
</comment>
<comment type="catalytic activity">
    <reaction evidence="1">
        <text>a quinone + NADH + 5 H(+)(in) = a quinol + NAD(+) + 4 H(+)(out)</text>
        <dbReference type="Rhea" id="RHEA:57888"/>
        <dbReference type="ChEBI" id="CHEBI:15378"/>
        <dbReference type="ChEBI" id="CHEBI:24646"/>
        <dbReference type="ChEBI" id="CHEBI:57540"/>
        <dbReference type="ChEBI" id="CHEBI:57945"/>
        <dbReference type="ChEBI" id="CHEBI:132124"/>
    </reaction>
</comment>
<comment type="subunit">
    <text evidence="1">NDH-1 is composed of 14 different subunits. Subunits NuoA, H, J, K, L, M, N constitute the membrane sector of the complex.</text>
</comment>
<comment type="subcellular location">
    <subcellularLocation>
        <location evidence="1">Cell inner membrane</location>
        <topology evidence="1">Multi-pass membrane protein</topology>
    </subcellularLocation>
</comment>
<comment type="similarity">
    <text evidence="1">Belongs to the complex I subunit 4L family.</text>
</comment>
<gene>
    <name evidence="1" type="primary">nuoK2</name>
    <name type="ordered locus">GSU3432</name>
</gene>
<name>NUOK2_GEOSL</name>
<proteinExistence type="inferred from homology"/>